<dbReference type="EMBL" id="LT708304">
    <property type="protein sequence ID" value="SIU00459.1"/>
    <property type="molecule type" value="Genomic_DNA"/>
</dbReference>
<dbReference type="RefSeq" id="NP_855507.1">
    <property type="nucleotide sequence ID" value="NC_002945.3"/>
</dbReference>
<dbReference type="RefSeq" id="WP_003899037.1">
    <property type="nucleotide sequence ID" value="NC_002945.4"/>
</dbReference>
<dbReference type="KEGG" id="mbo:BQ2027_MB1855"/>
<dbReference type="PATRIC" id="fig|233413.5.peg.2035"/>
<dbReference type="Proteomes" id="UP000001419">
    <property type="component" value="Chromosome"/>
</dbReference>
<dbReference type="GO" id="GO:0005886">
    <property type="term" value="C:plasma membrane"/>
    <property type="evidence" value="ECO:0007669"/>
    <property type="project" value="UniProtKB-SubCell"/>
</dbReference>
<dbReference type="InterPro" id="IPR009709">
    <property type="entry name" value="DUF1290"/>
</dbReference>
<dbReference type="Pfam" id="PF06947">
    <property type="entry name" value="DUF1290"/>
    <property type="match status" value="1"/>
</dbReference>
<dbReference type="PIRSF" id="PIRSF018579">
    <property type="entry name" value="Sbp"/>
    <property type="match status" value="1"/>
</dbReference>
<accession>P64894</accession>
<accession>A0A1R3XZH5</accession>
<accession>Q50609</accession>
<accession>X2BJ09</accession>
<keyword id="KW-1003">Cell membrane</keyword>
<keyword id="KW-0472">Membrane</keyword>
<keyword id="KW-1185">Reference proteome</keyword>
<keyword id="KW-0812">Transmembrane</keyword>
<keyword id="KW-1133">Transmembrane helix</keyword>
<sequence length="121" mass="12750">MGSDTAWSPARMIGIAALAVGIVLGLVFHPGVPEVIQPYLPIAVVAALDAVFGGLRAYLERIFDPKVFVVSFVFNVLVAALIVYVGDQLGVGTQLSTAIIVVLGIRIFGNTAALRRRLFGA</sequence>
<protein>
    <recommendedName>
        <fullName>Uncharacterized protein Mb1855</fullName>
    </recommendedName>
</protein>
<organism>
    <name type="scientific">Mycobacterium bovis (strain ATCC BAA-935 / AF2122/97)</name>
    <dbReference type="NCBI Taxonomy" id="233413"/>
    <lineage>
        <taxon>Bacteria</taxon>
        <taxon>Bacillati</taxon>
        <taxon>Actinomycetota</taxon>
        <taxon>Actinomycetes</taxon>
        <taxon>Mycobacteriales</taxon>
        <taxon>Mycobacteriaceae</taxon>
        <taxon>Mycobacterium</taxon>
        <taxon>Mycobacterium tuberculosis complex</taxon>
    </lineage>
</organism>
<comment type="subcellular location">
    <subcellularLocation>
        <location evidence="2">Cell membrane</location>
        <topology evidence="2">Multi-pass membrane protein</topology>
    </subcellularLocation>
</comment>
<comment type="similarity">
    <text evidence="2">Belongs to the sbp family.</text>
</comment>
<proteinExistence type="inferred from homology"/>
<evidence type="ECO:0000255" key="1"/>
<evidence type="ECO:0000305" key="2"/>
<name>Y1855_MYCBO</name>
<reference key="1">
    <citation type="journal article" date="2003" name="Proc. Natl. Acad. Sci. U.S.A.">
        <title>The complete genome sequence of Mycobacterium bovis.</title>
        <authorList>
            <person name="Garnier T."/>
            <person name="Eiglmeier K."/>
            <person name="Camus J.-C."/>
            <person name="Medina N."/>
            <person name="Mansoor H."/>
            <person name="Pryor M."/>
            <person name="Duthoy S."/>
            <person name="Grondin S."/>
            <person name="Lacroix C."/>
            <person name="Monsempe C."/>
            <person name="Simon S."/>
            <person name="Harris B."/>
            <person name="Atkin R."/>
            <person name="Doggett J."/>
            <person name="Mayes R."/>
            <person name="Keating L."/>
            <person name="Wheeler P.R."/>
            <person name="Parkhill J."/>
            <person name="Barrell B.G."/>
            <person name="Cole S.T."/>
            <person name="Gordon S.V."/>
            <person name="Hewinson R.G."/>
        </authorList>
    </citation>
    <scope>NUCLEOTIDE SEQUENCE [LARGE SCALE GENOMIC DNA]</scope>
    <source>
        <strain>ATCC BAA-935 / AF2122/97</strain>
    </source>
</reference>
<reference key="2">
    <citation type="journal article" date="2017" name="Genome Announc.">
        <title>Updated reference genome sequence and annotation of Mycobacterium bovis AF2122/97.</title>
        <authorList>
            <person name="Malone K.M."/>
            <person name="Farrell D."/>
            <person name="Stuber T.P."/>
            <person name="Schubert O.T."/>
            <person name="Aebersold R."/>
            <person name="Robbe-Austerman S."/>
            <person name="Gordon S.V."/>
        </authorList>
    </citation>
    <scope>NUCLEOTIDE SEQUENCE [LARGE SCALE GENOMIC DNA]</scope>
    <scope>GENOME REANNOTATION</scope>
    <source>
        <strain>ATCC BAA-935 / AF2122/97</strain>
    </source>
</reference>
<feature type="chain" id="PRO_0000103901" description="Uncharacterized protein Mb1855">
    <location>
        <begin position="1"/>
        <end position="121"/>
    </location>
</feature>
<feature type="transmembrane region" description="Helical" evidence="1">
    <location>
        <begin position="12"/>
        <end position="32"/>
    </location>
</feature>
<feature type="transmembrane region" description="Helical" evidence="1">
    <location>
        <begin position="35"/>
        <end position="55"/>
    </location>
</feature>
<feature type="transmembrane region" description="Helical" evidence="1">
    <location>
        <begin position="67"/>
        <end position="87"/>
    </location>
</feature>
<gene>
    <name type="ordered locus">BQ2027_MB1855</name>
</gene>